<reference key="1">
    <citation type="journal article" date="2009" name="Vaccine">
        <title>Whole genome sequence analysis of Mycobacterium bovis bacillus Calmette-Guerin (BCG) Tokyo 172: a comparative study of BCG vaccine substrains.</title>
        <authorList>
            <person name="Seki M."/>
            <person name="Honda I."/>
            <person name="Fujita I."/>
            <person name="Yano I."/>
            <person name="Yamamoto S."/>
            <person name="Koyama A."/>
        </authorList>
    </citation>
    <scope>NUCLEOTIDE SEQUENCE [LARGE SCALE GENOMIC DNA]</scope>
    <source>
        <strain>BCG / Tokyo 172 / ATCC 35737 / TMC 1019</strain>
    </source>
</reference>
<evidence type="ECO:0000255" key="1">
    <source>
        <dbReference type="HAMAP-Rule" id="MF_00518"/>
    </source>
</evidence>
<protein>
    <recommendedName>
        <fullName evidence="1">D-aminoacyl-tRNA deacylase</fullName>
        <shortName evidence="1">DTD</shortName>
        <ecNumber evidence="1">3.1.1.96</ecNumber>
    </recommendedName>
    <alternativeName>
        <fullName evidence="1">Gly-tRNA(Ala) deacylase</fullName>
    </alternativeName>
</protein>
<organism>
    <name type="scientific">Mycobacterium bovis (strain BCG / Tokyo 172 / ATCC 35737 / TMC 1019)</name>
    <dbReference type="NCBI Taxonomy" id="561275"/>
    <lineage>
        <taxon>Bacteria</taxon>
        <taxon>Bacillati</taxon>
        <taxon>Actinomycetota</taxon>
        <taxon>Actinomycetes</taxon>
        <taxon>Mycobacteriales</taxon>
        <taxon>Mycobacteriaceae</taxon>
        <taxon>Mycobacterium</taxon>
        <taxon>Mycobacterium tuberculosis complex</taxon>
    </lineage>
</organism>
<dbReference type="EC" id="3.1.1.96" evidence="1"/>
<dbReference type="EMBL" id="AP010918">
    <property type="protein sequence ID" value="BAH26206.1"/>
    <property type="molecule type" value="Genomic_DNA"/>
</dbReference>
<dbReference type="RefSeq" id="WP_011799228.1">
    <property type="nucleotide sequence ID" value="NZ_CP014566.1"/>
</dbReference>
<dbReference type="SMR" id="C1APH7"/>
<dbReference type="KEGG" id="mbt:JTY_1920"/>
<dbReference type="HOGENOM" id="CLU_076901_1_2_11"/>
<dbReference type="GO" id="GO:0005737">
    <property type="term" value="C:cytoplasm"/>
    <property type="evidence" value="ECO:0007669"/>
    <property type="project" value="UniProtKB-SubCell"/>
</dbReference>
<dbReference type="GO" id="GO:0051500">
    <property type="term" value="F:D-tyrosyl-tRNA(Tyr) deacylase activity"/>
    <property type="evidence" value="ECO:0007669"/>
    <property type="project" value="TreeGrafter"/>
</dbReference>
<dbReference type="GO" id="GO:0106026">
    <property type="term" value="F:Gly-tRNA(Ala) deacylase activity"/>
    <property type="evidence" value="ECO:0007669"/>
    <property type="project" value="UniProtKB-UniRule"/>
</dbReference>
<dbReference type="GO" id="GO:0043908">
    <property type="term" value="F:Ser(Gly)-tRNA(Ala) hydrolase activity"/>
    <property type="evidence" value="ECO:0007669"/>
    <property type="project" value="UniProtKB-UniRule"/>
</dbReference>
<dbReference type="GO" id="GO:0000049">
    <property type="term" value="F:tRNA binding"/>
    <property type="evidence" value="ECO:0007669"/>
    <property type="project" value="UniProtKB-UniRule"/>
</dbReference>
<dbReference type="GO" id="GO:0019478">
    <property type="term" value="P:D-amino acid catabolic process"/>
    <property type="evidence" value="ECO:0007669"/>
    <property type="project" value="UniProtKB-UniRule"/>
</dbReference>
<dbReference type="CDD" id="cd00563">
    <property type="entry name" value="Dtyr_deacylase"/>
    <property type="match status" value="1"/>
</dbReference>
<dbReference type="FunFam" id="3.50.80.10:FF:000002">
    <property type="entry name" value="D-aminoacyl-tRNA deacylase"/>
    <property type="match status" value="1"/>
</dbReference>
<dbReference type="Gene3D" id="3.50.80.10">
    <property type="entry name" value="D-tyrosyl-tRNA(Tyr) deacylase"/>
    <property type="match status" value="1"/>
</dbReference>
<dbReference type="HAMAP" id="MF_00518">
    <property type="entry name" value="Deacylase_Dtd"/>
    <property type="match status" value="1"/>
</dbReference>
<dbReference type="InterPro" id="IPR003732">
    <property type="entry name" value="Daa-tRNA_deacyls_DTD"/>
</dbReference>
<dbReference type="InterPro" id="IPR023509">
    <property type="entry name" value="DTD-like_sf"/>
</dbReference>
<dbReference type="NCBIfam" id="TIGR00256">
    <property type="entry name" value="D-aminoacyl-tRNA deacylase"/>
    <property type="match status" value="1"/>
</dbReference>
<dbReference type="PANTHER" id="PTHR10472:SF5">
    <property type="entry name" value="D-AMINOACYL-TRNA DEACYLASE 1"/>
    <property type="match status" value="1"/>
</dbReference>
<dbReference type="PANTHER" id="PTHR10472">
    <property type="entry name" value="D-TYROSYL-TRNA TYR DEACYLASE"/>
    <property type="match status" value="1"/>
</dbReference>
<dbReference type="Pfam" id="PF02580">
    <property type="entry name" value="Tyr_Deacylase"/>
    <property type="match status" value="1"/>
</dbReference>
<dbReference type="SUPFAM" id="SSF69500">
    <property type="entry name" value="DTD-like"/>
    <property type="match status" value="1"/>
</dbReference>
<sequence>MRVLVQRVSSAAVRVDGRVVGAIRPDGQGLVAFVGVTHGDDLDKARRLAEKLWNLRVLAGEKSASDMHAPILVISQFTLYADTAKGRRPSWNAAAPGAVAQPLIAAFAAALRQLGAHVEAGVFGAHMQVELVNDGPVTVMLEG</sequence>
<comment type="function">
    <text evidence="1">An aminoacyl-tRNA editing enzyme that deacylates mischarged D-aminoacyl-tRNAs. Also deacylates mischarged glycyl-tRNA(Ala), protecting cells against glycine mischarging by AlaRS. Acts via tRNA-based rather than protein-based catalysis; rejects L-amino acids rather than detecting D-amino acids in the active site. By recycling D-aminoacyl-tRNA to D-amino acids and free tRNA molecules, this enzyme counteracts the toxicity associated with the formation of D-aminoacyl-tRNA entities in vivo and helps enforce protein L-homochirality.</text>
</comment>
<comment type="catalytic activity">
    <reaction evidence="1">
        <text>glycyl-tRNA(Ala) + H2O = tRNA(Ala) + glycine + H(+)</text>
        <dbReference type="Rhea" id="RHEA:53744"/>
        <dbReference type="Rhea" id="RHEA-COMP:9657"/>
        <dbReference type="Rhea" id="RHEA-COMP:13640"/>
        <dbReference type="ChEBI" id="CHEBI:15377"/>
        <dbReference type="ChEBI" id="CHEBI:15378"/>
        <dbReference type="ChEBI" id="CHEBI:57305"/>
        <dbReference type="ChEBI" id="CHEBI:78442"/>
        <dbReference type="ChEBI" id="CHEBI:78522"/>
        <dbReference type="EC" id="3.1.1.96"/>
    </reaction>
</comment>
<comment type="catalytic activity">
    <reaction evidence="1">
        <text>a D-aminoacyl-tRNA + H2O = a tRNA + a D-alpha-amino acid + H(+)</text>
        <dbReference type="Rhea" id="RHEA:13953"/>
        <dbReference type="Rhea" id="RHEA-COMP:10123"/>
        <dbReference type="Rhea" id="RHEA-COMP:10124"/>
        <dbReference type="ChEBI" id="CHEBI:15377"/>
        <dbReference type="ChEBI" id="CHEBI:15378"/>
        <dbReference type="ChEBI" id="CHEBI:59871"/>
        <dbReference type="ChEBI" id="CHEBI:78442"/>
        <dbReference type="ChEBI" id="CHEBI:79333"/>
        <dbReference type="EC" id="3.1.1.96"/>
    </reaction>
</comment>
<comment type="subunit">
    <text evidence="1">Homodimer.</text>
</comment>
<comment type="subcellular location">
    <subcellularLocation>
        <location evidence="1">Cytoplasm</location>
    </subcellularLocation>
</comment>
<comment type="domain">
    <text evidence="1">A Gly-cisPro motif from one monomer fits into the active site of the other monomer to allow specific chiral rejection of L-amino acids.</text>
</comment>
<comment type="similarity">
    <text evidence="1">Belongs to the DTD family.</text>
</comment>
<keyword id="KW-0963">Cytoplasm</keyword>
<keyword id="KW-0378">Hydrolase</keyword>
<keyword id="KW-0694">RNA-binding</keyword>
<keyword id="KW-0820">tRNA-binding</keyword>
<feature type="chain" id="PRO_1000146204" description="D-aminoacyl-tRNA deacylase">
    <location>
        <begin position="1"/>
        <end position="143"/>
    </location>
</feature>
<feature type="short sequence motif" description="Gly-cisPro motif, important for rejection of L-amino acids" evidence="1">
    <location>
        <begin position="135"/>
        <end position="136"/>
    </location>
</feature>
<proteinExistence type="inferred from homology"/>
<gene>
    <name evidence="1" type="primary">dtd</name>
    <name type="ordered locus">JTY_1920</name>
</gene>
<name>DTD_MYCBT</name>
<accession>C1APH7</accession>